<sequence length="404" mass="44599">MKLPIYLDYSATTPVDPRVAQKMSECLLVDGNFGNPASRSHVFGWKAEESVENARRQVADLVNADPREIVWTSGATESDNLAIKGAAHFYASKGKHLITSKIEHKAVLDTMRQLEREGFEVTYLDPTEDGLITPAMIEAALREDTILVSVMHVNNEIGTVNDIAAIGELLRSKGILFHVDAAQSTGKVEIDLQKLKVDMMSFSAHKTYGPKGIGALYVSRKPRVRIEATMHGGGHERGMRSGTLATHQIVGMGEAFRVAKEDMAAENVRIKALSDRFYKQVEHLEELYVNGSLTARVPHNLNLSFNYVEGESLIMALKDLAVSSGSACTSASLEPSYVLRALGRNDELAHSSIRFTFGRFTTEEEIDYAAQKVCEAVTKLRALSPLWDMYKDGVDISKIEWAAH</sequence>
<dbReference type="EC" id="2.8.1.7" evidence="1"/>
<dbReference type="EMBL" id="CP000094">
    <property type="protein sequence ID" value="ABA76349.1"/>
    <property type="molecule type" value="Genomic_DNA"/>
</dbReference>
<dbReference type="RefSeq" id="WP_007956689.1">
    <property type="nucleotide sequence ID" value="NC_007492.2"/>
</dbReference>
<dbReference type="SMR" id="Q3K7A5"/>
<dbReference type="KEGG" id="pfo:Pfl01_4612"/>
<dbReference type="eggNOG" id="COG1104">
    <property type="taxonomic scope" value="Bacteria"/>
</dbReference>
<dbReference type="HOGENOM" id="CLU_003433_0_2_6"/>
<dbReference type="UniPathway" id="UPA00266"/>
<dbReference type="Proteomes" id="UP000002704">
    <property type="component" value="Chromosome"/>
</dbReference>
<dbReference type="GO" id="GO:1990221">
    <property type="term" value="C:L-cysteine desulfurase complex"/>
    <property type="evidence" value="ECO:0007669"/>
    <property type="project" value="UniProtKB-ARBA"/>
</dbReference>
<dbReference type="GO" id="GO:0051537">
    <property type="term" value="F:2 iron, 2 sulfur cluster binding"/>
    <property type="evidence" value="ECO:0007669"/>
    <property type="project" value="UniProtKB-UniRule"/>
</dbReference>
<dbReference type="GO" id="GO:0031071">
    <property type="term" value="F:cysteine desulfurase activity"/>
    <property type="evidence" value="ECO:0007669"/>
    <property type="project" value="UniProtKB-UniRule"/>
</dbReference>
<dbReference type="GO" id="GO:0046872">
    <property type="term" value="F:metal ion binding"/>
    <property type="evidence" value="ECO:0007669"/>
    <property type="project" value="UniProtKB-KW"/>
</dbReference>
<dbReference type="GO" id="GO:0030170">
    <property type="term" value="F:pyridoxal phosphate binding"/>
    <property type="evidence" value="ECO:0007669"/>
    <property type="project" value="UniProtKB-UniRule"/>
</dbReference>
<dbReference type="GO" id="GO:0044571">
    <property type="term" value="P:[2Fe-2S] cluster assembly"/>
    <property type="evidence" value="ECO:0007669"/>
    <property type="project" value="UniProtKB-UniRule"/>
</dbReference>
<dbReference type="FunFam" id="3.40.640.10:FF:000003">
    <property type="entry name" value="Cysteine desulfurase IscS"/>
    <property type="match status" value="1"/>
</dbReference>
<dbReference type="FunFam" id="3.90.1150.10:FF:000002">
    <property type="entry name" value="Cysteine desulfurase IscS"/>
    <property type="match status" value="1"/>
</dbReference>
<dbReference type="Gene3D" id="3.90.1150.10">
    <property type="entry name" value="Aspartate Aminotransferase, domain 1"/>
    <property type="match status" value="1"/>
</dbReference>
<dbReference type="Gene3D" id="3.40.640.10">
    <property type="entry name" value="Type I PLP-dependent aspartate aminotransferase-like (Major domain)"/>
    <property type="match status" value="1"/>
</dbReference>
<dbReference type="HAMAP" id="MF_00331">
    <property type="entry name" value="Cys_desulf_IscS"/>
    <property type="match status" value="1"/>
</dbReference>
<dbReference type="InterPro" id="IPR000192">
    <property type="entry name" value="Aminotrans_V_dom"/>
</dbReference>
<dbReference type="InterPro" id="IPR020578">
    <property type="entry name" value="Aminotrans_V_PyrdxlP_BS"/>
</dbReference>
<dbReference type="InterPro" id="IPR010240">
    <property type="entry name" value="Cys_deSase_IscS"/>
</dbReference>
<dbReference type="InterPro" id="IPR016454">
    <property type="entry name" value="Cysteine_dSase"/>
</dbReference>
<dbReference type="InterPro" id="IPR015424">
    <property type="entry name" value="PyrdxlP-dep_Trfase"/>
</dbReference>
<dbReference type="InterPro" id="IPR015421">
    <property type="entry name" value="PyrdxlP-dep_Trfase_major"/>
</dbReference>
<dbReference type="InterPro" id="IPR015422">
    <property type="entry name" value="PyrdxlP-dep_Trfase_small"/>
</dbReference>
<dbReference type="NCBIfam" id="TIGR02006">
    <property type="entry name" value="IscS"/>
    <property type="match status" value="1"/>
</dbReference>
<dbReference type="NCBIfam" id="NF010611">
    <property type="entry name" value="PRK14012.1"/>
    <property type="match status" value="1"/>
</dbReference>
<dbReference type="PANTHER" id="PTHR11601:SF34">
    <property type="entry name" value="CYSTEINE DESULFURASE"/>
    <property type="match status" value="1"/>
</dbReference>
<dbReference type="PANTHER" id="PTHR11601">
    <property type="entry name" value="CYSTEINE DESULFURYLASE FAMILY MEMBER"/>
    <property type="match status" value="1"/>
</dbReference>
<dbReference type="Pfam" id="PF00266">
    <property type="entry name" value="Aminotran_5"/>
    <property type="match status" value="1"/>
</dbReference>
<dbReference type="PIRSF" id="PIRSF005572">
    <property type="entry name" value="NifS"/>
    <property type="match status" value="1"/>
</dbReference>
<dbReference type="SUPFAM" id="SSF53383">
    <property type="entry name" value="PLP-dependent transferases"/>
    <property type="match status" value="1"/>
</dbReference>
<dbReference type="PROSITE" id="PS00595">
    <property type="entry name" value="AA_TRANSFER_CLASS_5"/>
    <property type="match status" value="1"/>
</dbReference>
<comment type="function">
    <text evidence="1">Master enzyme that delivers sulfur to a number of partners involved in Fe-S cluster assembly, tRNA modification or cofactor biosynthesis. Catalyzes the removal of elemental sulfur atoms from cysteine to produce alanine. Functions as a sulfur delivery protein for Fe-S cluster synthesis onto IscU, an Fe-S scaffold assembly protein, as well as other S acceptor proteins.</text>
</comment>
<comment type="catalytic activity">
    <reaction evidence="1">
        <text>(sulfur carrier)-H + L-cysteine = (sulfur carrier)-SH + L-alanine</text>
        <dbReference type="Rhea" id="RHEA:43892"/>
        <dbReference type="Rhea" id="RHEA-COMP:14737"/>
        <dbReference type="Rhea" id="RHEA-COMP:14739"/>
        <dbReference type="ChEBI" id="CHEBI:29917"/>
        <dbReference type="ChEBI" id="CHEBI:35235"/>
        <dbReference type="ChEBI" id="CHEBI:57972"/>
        <dbReference type="ChEBI" id="CHEBI:64428"/>
        <dbReference type="EC" id="2.8.1.7"/>
    </reaction>
</comment>
<comment type="cofactor">
    <cofactor evidence="1">
        <name>pyridoxal 5'-phosphate</name>
        <dbReference type="ChEBI" id="CHEBI:597326"/>
    </cofactor>
</comment>
<comment type="pathway">
    <text evidence="1">Cofactor biosynthesis; iron-sulfur cluster biosynthesis.</text>
</comment>
<comment type="subunit">
    <text evidence="1">Homodimer. Forms a heterotetramer with IscU, interacts with other sulfur acceptors.</text>
</comment>
<comment type="subcellular location">
    <subcellularLocation>
        <location evidence="1">Cytoplasm</location>
    </subcellularLocation>
</comment>
<comment type="similarity">
    <text evidence="1">Belongs to the class-V pyridoxal-phosphate-dependent aminotransferase family. NifS/IscS subfamily.</text>
</comment>
<evidence type="ECO:0000255" key="1">
    <source>
        <dbReference type="HAMAP-Rule" id="MF_00331"/>
    </source>
</evidence>
<proteinExistence type="inferred from homology"/>
<protein>
    <recommendedName>
        <fullName evidence="1">Cysteine desulfurase IscS</fullName>
        <ecNumber evidence="1">2.8.1.7</ecNumber>
    </recommendedName>
</protein>
<accession>Q3K7A5</accession>
<reference key="1">
    <citation type="journal article" date="2009" name="Genome Biol.">
        <title>Genomic and genetic analyses of diversity and plant interactions of Pseudomonas fluorescens.</title>
        <authorList>
            <person name="Silby M.W."/>
            <person name="Cerdeno-Tarraga A.M."/>
            <person name="Vernikos G.S."/>
            <person name="Giddens S.R."/>
            <person name="Jackson R.W."/>
            <person name="Preston G.M."/>
            <person name="Zhang X.-X."/>
            <person name="Moon C.D."/>
            <person name="Gehrig S.M."/>
            <person name="Godfrey S.A.C."/>
            <person name="Knight C.G."/>
            <person name="Malone J.G."/>
            <person name="Robinson Z."/>
            <person name="Spiers A.J."/>
            <person name="Harris S."/>
            <person name="Challis G.L."/>
            <person name="Yaxley A.M."/>
            <person name="Harris D."/>
            <person name="Seeger K."/>
            <person name="Murphy L."/>
            <person name="Rutter S."/>
            <person name="Squares R."/>
            <person name="Quail M.A."/>
            <person name="Saunders E."/>
            <person name="Mavromatis K."/>
            <person name="Brettin T.S."/>
            <person name="Bentley S.D."/>
            <person name="Hothersall J."/>
            <person name="Stephens E."/>
            <person name="Thomas C.M."/>
            <person name="Parkhill J."/>
            <person name="Levy S.B."/>
            <person name="Rainey P.B."/>
            <person name="Thomson N.R."/>
        </authorList>
    </citation>
    <scope>NUCLEOTIDE SEQUENCE [LARGE SCALE GENOMIC DNA]</scope>
    <source>
        <strain>Pf0-1</strain>
    </source>
</reference>
<feature type="chain" id="PRO_1000019429" description="Cysteine desulfurase IscS">
    <location>
        <begin position="1"/>
        <end position="404"/>
    </location>
</feature>
<feature type="active site" description="Cysteine persulfide intermediate" evidence="1">
    <location>
        <position position="328"/>
    </location>
</feature>
<feature type="binding site" evidence="1">
    <location>
        <begin position="75"/>
        <end position="76"/>
    </location>
    <ligand>
        <name>pyridoxal 5'-phosphate</name>
        <dbReference type="ChEBI" id="CHEBI:597326"/>
    </ligand>
</feature>
<feature type="binding site" evidence="1">
    <location>
        <position position="155"/>
    </location>
    <ligand>
        <name>pyridoxal 5'-phosphate</name>
        <dbReference type="ChEBI" id="CHEBI:597326"/>
    </ligand>
</feature>
<feature type="binding site" evidence="1">
    <location>
        <position position="183"/>
    </location>
    <ligand>
        <name>pyridoxal 5'-phosphate</name>
        <dbReference type="ChEBI" id="CHEBI:597326"/>
    </ligand>
</feature>
<feature type="binding site" evidence="1">
    <location>
        <begin position="203"/>
        <end position="205"/>
    </location>
    <ligand>
        <name>pyridoxal 5'-phosphate</name>
        <dbReference type="ChEBI" id="CHEBI:597326"/>
    </ligand>
</feature>
<feature type="binding site" evidence="1">
    <location>
        <position position="243"/>
    </location>
    <ligand>
        <name>pyridoxal 5'-phosphate</name>
        <dbReference type="ChEBI" id="CHEBI:597326"/>
    </ligand>
</feature>
<feature type="binding site" description="via persulfide group" evidence="1">
    <location>
        <position position="328"/>
    </location>
    <ligand>
        <name>[2Fe-2S] cluster</name>
        <dbReference type="ChEBI" id="CHEBI:190135"/>
        <note>ligand shared with IscU</note>
    </ligand>
</feature>
<feature type="modified residue" description="N6-(pyridoxal phosphate)lysine" evidence="1">
    <location>
        <position position="206"/>
    </location>
</feature>
<name>ISCS_PSEPF</name>
<organism>
    <name type="scientific">Pseudomonas fluorescens (strain Pf0-1)</name>
    <dbReference type="NCBI Taxonomy" id="205922"/>
    <lineage>
        <taxon>Bacteria</taxon>
        <taxon>Pseudomonadati</taxon>
        <taxon>Pseudomonadota</taxon>
        <taxon>Gammaproteobacteria</taxon>
        <taxon>Pseudomonadales</taxon>
        <taxon>Pseudomonadaceae</taxon>
        <taxon>Pseudomonas</taxon>
    </lineage>
</organism>
<keyword id="KW-0001">2Fe-2S</keyword>
<keyword id="KW-0963">Cytoplasm</keyword>
<keyword id="KW-0408">Iron</keyword>
<keyword id="KW-0411">Iron-sulfur</keyword>
<keyword id="KW-0479">Metal-binding</keyword>
<keyword id="KW-0663">Pyridoxal phosphate</keyword>
<keyword id="KW-0808">Transferase</keyword>
<gene>
    <name evidence="1" type="primary">iscS</name>
    <name type="ordered locus">Pfl01_4612</name>
</gene>